<gene>
    <name evidence="1" type="primary">prfC</name>
    <name type="ordered locus">Shal_3140</name>
</gene>
<comment type="function">
    <text evidence="1">Increases the formation of ribosomal termination complexes and stimulates activities of RF-1 and RF-2. It binds guanine nucleotides and has strong preference for UGA stop codons. It may interact directly with the ribosome. The stimulation of RF-1 and RF-2 is significantly reduced by GTP and GDP, but not by GMP.</text>
</comment>
<comment type="subcellular location">
    <subcellularLocation>
        <location evidence="1">Cytoplasm</location>
    </subcellularLocation>
</comment>
<comment type="similarity">
    <text evidence="1">Belongs to the TRAFAC class translation factor GTPase superfamily. Classic translation factor GTPase family. PrfC subfamily.</text>
</comment>
<feature type="chain" id="PRO_1000075168" description="Peptide chain release factor 3">
    <location>
        <begin position="1"/>
        <end position="526"/>
    </location>
</feature>
<feature type="domain" description="tr-type G">
    <location>
        <begin position="9"/>
        <end position="277"/>
    </location>
</feature>
<feature type="binding site" evidence="1">
    <location>
        <begin position="18"/>
        <end position="25"/>
    </location>
    <ligand>
        <name>GTP</name>
        <dbReference type="ChEBI" id="CHEBI:37565"/>
    </ligand>
</feature>
<feature type="binding site" evidence="1">
    <location>
        <begin position="86"/>
        <end position="90"/>
    </location>
    <ligand>
        <name>GTP</name>
        <dbReference type="ChEBI" id="CHEBI:37565"/>
    </ligand>
</feature>
<feature type="binding site" evidence="1">
    <location>
        <begin position="140"/>
        <end position="143"/>
    </location>
    <ligand>
        <name>GTP</name>
        <dbReference type="ChEBI" id="CHEBI:37565"/>
    </ligand>
</feature>
<name>RF3_SHEHH</name>
<sequence length="526" mass="59320">MSGNKVEVDKRRTFAIISHPDAGKTTITEKVLLFGNALQKAGTVKGKKSGQHAKSDWMEMEKDRGISITTSVMQFPYHDALVNLLDTPGHEDFSEDTYRTLTAVDSCLMVIDSAKGVEQRTIKLMEVTRLRDTPIVTFMNKLDRDIRDPIELMDEVEEVLNIKCAPITWPIGCGKEFKGVYHLLRDEVILYQGGMGHTIQDSRVIKGLDNPELDDAIGSYAADIRDEMELVVGASHEFDLELFLKGELTPVYFGTALGNFGVDHILDGIVEWAPIPQPRETETRDVQPEEEKFSGFVFKIQANMDPKHRDRVAFMRVCSGRYEQGMKMHHVRLGKDVNVSDALTFMAGDRNRAEAAYPGDIIGLHNHGTIRIGDTFTQGEKLRFTGVPNFAPEMFRRIRLRDPLKQKQLLKGLVQLSEEGAVQVFRPLDSNDLIVGAVGVLQFEVVVGRLKTEYKVEAIYEAISVATARWVYCNDHKKLDEFKRKCSMNLALDGGDNLTYIAPTMVNLNLSMERYPDIEFAKTREN</sequence>
<dbReference type="EMBL" id="CP000931">
    <property type="protein sequence ID" value="ABZ77687.1"/>
    <property type="molecule type" value="Genomic_DNA"/>
</dbReference>
<dbReference type="RefSeq" id="WP_012278212.1">
    <property type="nucleotide sequence ID" value="NC_010334.1"/>
</dbReference>
<dbReference type="SMR" id="B0TQ95"/>
<dbReference type="STRING" id="458817.Shal_3140"/>
<dbReference type="KEGG" id="shl:Shal_3140"/>
<dbReference type="eggNOG" id="COG4108">
    <property type="taxonomic scope" value="Bacteria"/>
</dbReference>
<dbReference type="HOGENOM" id="CLU_002794_2_1_6"/>
<dbReference type="OrthoDB" id="9804431at2"/>
<dbReference type="Proteomes" id="UP000001317">
    <property type="component" value="Chromosome"/>
</dbReference>
<dbReference type="GO" id="GO:0005829">
    <property type="term" value="C:cytosol"/>
    <property type="evidence" value="ECO:0007669"/>
    <property type="project" value="TreeGrafter"/>
</dbReference>
<dbReference type="GO" id="GO:0005525">
    <property type="term" value="F:GTP binding"/>
    <property type="evidence" value="ECO:0007669"/>
    <property type="project" value="UniProtKB-UniRule"/>
</dbReference>
<dbReference type="GO" id="GO:0003924">
    <property type="term" value="F:GTPase activity"/>
    <property type="evidence" value="ECO:0007669"/>
    <property type="project" value="InterPro"/>
</dbReference>
<dbReference type="GO" id="GO:0097216">
    <property type="term" value="F:guanosine tetraphosphate binding"/>
    <property type="evidence" value="ECO:0007669"/>
    <property type="project" value="UniProtKB-ARBA"/>
</dbReference>
<dbReference type="GO" id="GO:0016150">
    <property type="term" value="F:translation release factor activity, codon nonspecific"/>
    <property type="evidence" value="ECO:0007669"/>
    <property type="project" value="TreeGrafter"/>
</dbReference>
<dbReference type="GO" id="GO:0016149">
    <property type="term" value="F:translation release factor activity, codon specific"/>
    <property type="evidence" value="ECO:0007669"/>
    <property type="project" value="UniProtKB-UniRule"/>
</dbReference>
<dbReference type="GO" id="GO:0006449">
    <property type="term" value="P:regulation of translational termination"/>
    <property type="evidence" value="ECO:0007669"/>
    <property type="project" value="UniProtKB-UniRule"/>
</dbReference>
<dbReference type="CDD" id="cd04169">
    <property type="entry name" value="RF3"/>
    <property type="match status" value="1"/>
</dbReference>
<dbReference type="CDD" id="cd03689">
    <property type="entry name" value="RF3_II"/>
    <property type="match status" value="1"/>
</dbReference>
<dbReference type="CDD" id="cd16259">
    <property type="entry name" value="RF3_III"/>
    <property type="match status" value="1"/>
</dbReference>
<dbReference type="FunFam" id="2.40.30.10:FF:000040">
    <property type="entry name" value="Peptide chain release factor 3"/>
    <property type="match status" value="1"/>
</dbReference>
<dbReference type="FunFam" id="3.30.70.3280:FF:000001">
    <property type="entry name" value="Peptide chain release factor 3"/>
    <property type="match status" value="1"/>
</dbReference>
<dbReference type="FunFam" id="3.40.50.300:FF:000542">
    <property type="entry name" value="Peptide chain release factor 3"/>
    <property type="match status" value="1"/>
</dbReference>
<dbReference type="Gene3D" id="3.40.50.300">
    <property type="entry name" value="P-loop containing nucleotide triphosphate hydrolases"/>
    <property type="match status" value="2"/>
</dbReference>
<dbReference type="Gene3D" id="3.30.70.3280">
    <property type="entry name" value="Peptide chain release factor 3, domain III"/>
    <property type="match status" value="1"/>
</dbReference>
<dbReference type="HAMAP" id="MF_00072">
    <property type="entry name" value="Rel_fac_3"/>
    <property type="match status" value="1"/>
</dbReference>
<dbReference type="InterPro" id="IPR053905">
    <property type="entry name" value="EF-G-like_DII"/>
</dbReference>
<dbReference type="InterPro" id="IPR035647">
    <property type="entry name" value="EFG_III/V"/>
</dbReference>
<dbReference type="InterPro" id="IPR031157">
    <property type="entry name" value="G_TR_CS"/>
</dbReference>
<dbReference type="InterPro" id="IPR027417">
    <property type="entry name" value="P-loop_NTPase"/>
</dbReference>
<dbReference type="InterPro" id="IPR004548">
    <property type="entry name" value="PrfC"/>
</dbReference>
<dbReference type="InterPro" id="IPR032090">
    <property type="entry name" value="RF3_C"/>
</dbReference>
<dbReference type="InterPro" id="IPR038467">
    <property type="entry name" value="RF3_dom_3_sf"/>
</dbReference>
<dbReference type="InterPro" id="IPR041732">
    <property type="entry name" value="RF3_GTP-bd"/>
</dbReference>
<dbReference type="InterPro" id="IPR005225">
    <property type="entry name" value="Small_GTP-bd"/>
</dbReference>
<dbReference type="InterPro" id="IPR000795">
    <property type="entry name" value="T_Tr_GTP-bd_dom"/>
</dbReference>
<dbReference type="InterPro" id="IPR009000">
    <property type="entry name" value="Transl_B-barrel_sf"/>
</dbReference>
<dbReference type="NCBIfam" id="TIGR00503">
    <property type="entry name" value="prfC"/>
    <property type="match status" value="1"/>
</dbReference>
<dbReference type="NCBIfam" id="NF001964">
    <property type="entry name" value="PRK00741.1"/>
    <property type="match status" value="1"/>
</dbReference>
<dbReference type="NCBIfam" id="TIGR00231">
    <property type="entry name" value="small_GTP"/>
    <property type="match status" value="1"/>
</dbReference>
<dbReference type="PANTHER" id="PTHR43556">
    <property type="entry name" value="PEPTIDE CHAIN RELEASE FACTOR RF3"/>
    <property type="match status" value="1"/>
</dbReference>
<dbReference type="PANTHER" id="PTHR43556:SF2">
    <property type="entry name" value="PEPTIDE CHAIN RELEASE FACTOR RF3"/>
    <property type="match status" value="1"/>
</dbReference>
<dbReference type="Pfam" id="PF22042">
    <property type="entry name" value="EF-G_D2"/>
    <property type="match status" value="1"/>
</dbReference>
<dbReference type="Pfam" id="PF00009">
    <property type="entry name" value="GTP_EFTU"/>
    <property type="match status" value="1"/>
</dbReference>
<dbReference type="Pfam" id="PF16658">
    <property type="entry name" value="RF3_C"/>
    <property type="match status" value="1"/>
</dbReference>
<dbReference type="PRINTS" id="PR00315">
    <property type="entry name" value="ELONGATNFCT"/>
</dbReference>
<dbReference type="SUPFAM" id="SSF54980">
    <property type="entry name" value="EF-G C-terminal domain-like"/>
    <property type="match status" value="1"/>
</dbReference>
<dbReference type="SUPFAM" id="SSF52540">
    <property type="entry name" value="P-loop containing nucleoside triphosphate hydrolases"/>
    <property type="match status" value="1"/>
</dbReference>
<dbReference type="SUPFAM" id="SSF50447">
    <property type="entry name" value="Translation proteins"/>
    <property type="match status" value="1"/>
</dbReference>
<dbReference type="PROSITE" id="PS00301">
    <property type="entry name" value="G_TR_1"/>
    <property type="match status" value="1"/>
</dbReference>
<dbReference type="PROSITE" id="PS51722">
    <property type="entry name" value="G_TR_2"/>
    <property type="match status" value="1"/>
</dbReference>
<keyword id="KW-0963">Cytoplasm</keyword>
<keyword id="KW-0342">GTP-binding</keyword>
<keyword id="KW-0547">Nucleotide-binding</keyword>
<keyword id="KW-0648">Protein biosynthesis</keyword>
<protein>
    <recommendedName>
        <fullName evidence="1">Peptide chain release factor 3</fullName>
        <shortName evidence="1">RF-3</shortName>
    </recommendedName>
</protein>
<accession>B0TQ95</accession>
<proteinExistence type="inferred from homology"/>
<evidence type="ECO:0000255" key="1">
    <source>
        <dbReference type="HAMAP-Rule" id="MF_00072"/>
    </source>
</evidence>
<organism>
    <name type="scientific">Shewanella halifaxensis (strain HAW-EB4)</name>
    <dbReference type="NCBI Taxonomy" id="458817"/>
    <lineage>
        <taxon>Bacteria</taxon>
        <taxon>Pseudomonadati</taxon>
        <taxon>Pseudomonadota</taxon>
        <taxon>Gammaproteobacteria</taxon>
        <taxon>Alteromonadales</taxon>
        <taxon>Shewanellaceae</taxon>
        <taxon>Shewanella</taxon>
    </lineage>
</organism>
<reference key="1">
    <citation type="submission" date="2008-01" db="EMBL/GenBank/DDBJ databases">
        <title>Complete sequence of Shewanella halifaxensis HAW-EB4.</title>
        <authorList>
            <consortium name="US DOE Joint Genome Institute"/>
            <person name="Copeland A."/>
            <person name="Lucas S."/>
            <person name="Lapidus A."/>
            <person name="Glavina del Rio T."/>
            <person name="Dalin E."/>
            <person name="Tice H."/>
            <person name="Bruce D."/>
            <person name="Goodwin L."/>
            <person name="Pitluck S."/>
            <person name="Sims D."/>
            <person name="Brettin T."/>
            <person name="Detter J.C."/>
            <person name="Han C."/>
            <person name="Kuske C.R."/>
            <person name="Schmutz J."/>
            <person name="Larimer F."/>
            <person name="Land M."/>
            <person name="Hauser L."/>
            <person name="Kyrpides N."/>
            <person name="Kim E."/>
            <person name="Zhao J.-S."/>
            <person name="Richardson P."/>
        </authorList>
    </citation>
    <scope>NUCLEOTIDE SEQUENCE [LARGE SCALE GENOMIC DNA]</scope>
    <source>
        <strain>HAW-EB4</strain>
    </source>
</reference>